<accession>F4HVM3</accession>
<accession>Q9C9F2</accession>
<organism>
    <name type="scientific">Arabidopsis thaliana</name>
    <name type="common">Mouse-ear cress</name>
    <dbReference type="NCBI Taxonomy" id="3702"/>
    <lineage>
        <taxon>Eukaryota</taxon>
        <taxon>Viridiplantae</taxon>
        <taxon>Streptophyta</taxon>
        <taxon>Embryophyta</taxon>
        <taxon>Tracheophyta</taxon>
        <taxon>Spermatophyta</taxon>
        <taxon>Magnoliopsida</taxon>
        <taxon>eudicotyledons</taxon>
        <taxon>Gunneridae</taxon>
        <taxon>Pentapetalae</taxon>
        <taxon>rosids</taxon>
        <taxon>malvids</taxon>
        <taxon>Brassicales</taxon>
        <taxon>Brassicaceae</taxon>
        <taxon>Camelineae</taxon>
        <taxon>Arabidopsis</taxon>
    </lineage>
</organism>
<proteinExistence type="inferred from homology"/>
<protein>
    <recommendedName>
        <fullName>WAT1-related protein At1g68170</fullName>
    </recommendedName>
</protein>
<name>WTR10_ARATH</name>
<feature type="chain" id="PRO_0000421318" description="WAT1-related protein At1g68170">
    <location>
        <begin position="1"/>
        <end position="356"/>
    </location>
</feature>
<feature type="transmembrane region" description="Helical" evidence="2">
    <location>
        <begin position="4"/>
        <end position="24"/>
    </location>
</feature>
<feature type="transmembrane region" description="Helical" evidence="2">
    <location>
        <begin position="33"/>
        <end position="53"/>
    </location>
</feature>
<feature type="transmembrane region" description="Helical" evidence="2">
    <location>
        <begin position="65"/>
        <end position="85"/>
    </location>
</feature>
<feature type="transmembrane region" description="Helical" evidence="2">
    <location>
        <begin position="94"/>
        <end position="114"/>
    </location>
</feature>
<feature type="transmembrane region" description="Helical" evidence="2">
    <location>
        <begin position="125"/>
        <end position="145"/>
    </location>
</feature>
<feature type="transmembrane region" description="Helical" evidence="2">
    <location>
        <begin position="176"/>
        <end position="196"/>
    </location>
</feature>
<feature type="transmembrane region" description="Helical" evidence="2">
    <location>
        <begin position="210"/>
        <end position="230"/>
    </location>
</feature>
<feature type="transmembrane region" description="Helical" evidence="2">
    <location>
        <begin position="245"/>
        <end position="265"/>
    </location>
</feature>
<feature type="transmembrane region" description="Helical" evidence="2">
    <location>
        <begin position="273"/>
        <end position="293"/>
    </location>
</feature>
<feature type="transmembrane region" description="Helical" evidence="2">
    <location>
        <begin position="298"/>
        <end position="318"/>
    </location>
</feature>
<feature type="domain" description="EamA 1">
    <location>
        <begin position="14"/>
        <end position="142"/>
    </location>
</feature>
<feature type="domain" description="EamA 2">
    <location>
        <begin position="191"/>
        <end position="317"/>
    </location>
</feature>
<reference key="1">
    <citation type="journal article" date="2000" name="Nature">
        <title>Sequence and analysis of chromosome 1 of the plant Arabidopsis thaliana.</title>
        <authorList>
            <person name="Theologis A."/>
            <person name="Ecker J.R."/>
            <person name="Palm C.J."/>
            <person name="Federspiel N.A."/>
            <person name="Kaul S."/>
            <person name="White O."/>
            <person name="Alonso J."/>
            <person name="Altafi H."/>
            <person name="Araujo R."/>
            <person name="Bowman C.L."/>
            <person name="Brooks S.Y."/>
            <person name="Buehler E."/>
            <person name="Chan A."/>
            <person name="Chao Q."/>
            <person name="Chen H."/>
            <person name="Cheuk R.F."/>
            <person name="Chin C.W."/>
            <person name="Chung M.K."/>
            <person name="Conn L."/>
            <person name="Conway A.B."/>
            <person name="Conway A.R."/>
            <person name="Creasy T.H."/>
            <person name="Dewar K."/>
            <person name="Dunn P."/>
            <person name="Etgu P."/>
            <person name="Feldblyum T.V."/>
            <person name="Feng J.-D."/>
            <person name="Fong B."/>
            <person name="Fujii C.Y."/>
            <person name="Gill J.E."/>
            <person name="Goldsmith A.D."/>
            <person name="Haas B."/>
            <person name="Hansen N.F."/>
            <person name="Hughes B."/>
            <person name="Huizar L."/>
            <person name="Hunter J.L."/>
            <person name="Jenkins J."/>
            <person name="Johnson-Hopson C."/>
            <person name="Khan S."/>
            <person name="Khaykin E."/>
            <person name="Kim C.J."/>
            <person name="Koo H.L."/>
            <person name="Kremenetskaia I."/>
            <person name="Kurtz D.B."/>
            <person name="Kwan A."/>
            <person name="Lam B."/>
            <person name="Langin-Hooper S."/>
            <person name="Lee A."/>
            <person name="Lee J.M."/>
            <person name="Lenz C.A."/>
            <person name="Li J.H."/>
            <person name="Li Y.-P."/>
            <person name="Lin X."/>
            <person name="Liu S.X."/>
            <person name="Liu Z.A."/>
            <person name="Luros J.S."/>
            <person name="Maiti R."/>
            <person name="Marziali A."/>
            <person name="Militscher J."/>
            <person name="Miranda M."/>
            <person name="Nguyen M."/>
            <person name="Nierman W.C."/>
            <person name="Osborne B.I."/>
            <person name="Pai G."/>
            <person name="Peterson J."/>
            <person name="Pham P.K."/>
            <person name="Rizzo M."/>
            <person name="Rooney T."/>
            <person name="Rowley D."/>
            <person name="Sakano H."/>
            <person name="Salzberg S.L."/>
            <person name="Schwartz J.R."/>
            <person name="Shinn P."/>
            <person name="Southwick A.M."/>
            <person name="Sun H."/>
            <person name="Tallon L.J."/>
            <person name="Tambunga G."/>
            <person name="Toriumi M.J."/>
            <person name="Town C.D."/>
            <person name="Utterback T."/>
            <person name="Van Aken S."/>
            <person name="Vaysberg M."/>
            <person name="Vysotskaia V.S."/>
            <person name="Walker M."/>
            <person name="Wu D."/>
            <person name="Yu G."/>
            <person name="Fraser C.M."/>
            <person name="Venter J.C."/>
            <person name="Davis R.W."/>
        </authorList>
    </citation>
    <scope>NUCLEOTIDE SEQUENCE [LARGE SCALE GENOMIC DNA]</scope>
    <source>
        <strain>cv. Columbia</strain>
    </source>
</reference>
<reference key="2">
    <citation type="journal article" date="2017" name="Plant J.">
        <title>Araport11: a complete reannotation of the Arabidopsis thaliana reference genome.</title>
        <authorList>
            <person name="Cheng C.Y."/>
            <person name="Krishnakumar V."/>
            <person name="Chan A.P."/>
            <person name="Thibaud-Nissen F."/>
            <person name="Schobel S."/>
            <person name="Town C.D."/>
        </authorList>
    </citation>
    <scope>GENOME REANNOTATION</scope>
    <source>
        <strain>cv. Columbia</strain>
    </source>
</reference>
<evidence type="ECO:0000250" key="1"/>
<evidence type="ECO:0000255" key="2"/>
<evidence type="ECO:0000305" key="3"/>
<dbReference type="EMBL" id="AC016447">
    <property type="protein sequence ID" value="AAG52606.1"/>
    <property type="status" value="ALT_SEQ"/>
    <property type="molecule type" value="Genomic_DNA"/>
</dbReference>
<dbReference type="EMBL" id="CP002684">
    <property type="protein sequence ID" value="AEE34759.1"/>
    <property type="molecule type" value="Genomic_DNA"/>
</dbReference>
<dbReference type="PIR" id="A96705">
    <property type="entry name" value="A96705"/>
</dbReference>
<dbReference type="RefSeq" id="NP_176984.2">
    <property type="nucleotide sequence ID" value="NM_105487.3"/>
</dbReference>
<dbReference type="SMR" id="F4HVM3"/>
<dbReference type="BioGRID" id="28366">
    <property type="interactions" value="2"/>
</dbReference>
<dbReference type="IntAct" id="F4HVM3">
    <property type="interactions" value="2"/>
</dbReference>
<dbReference type="STRING" id="3702.F4HVM3"/>
<dbReference type="PaxDb" id="3702-AT1G68170.1"/>
<dbReference type="EnsemblPlants" id="AT1G68170.1">
    <property type="protein sequence ID" value="AT1G68170.1"/>
    <property type="gene ID" value="AT1G68170"/>
</dbReference>
<dbReference type="GeneID" id="843145"/>
<dbReference type="Gramene" id="AT1G68170.1">
    <property type="protein sequence ID" value="AT1G68170.1"/>
    <property type="gene ID" value="AT1G68170"/>
</dbReference>
<dbReference type="KEGG" id="ath:AT1G68170"/>
<dbReference type="Araport" id="AT1G68170"/>
<dbReference type="TAIR" id="AT1G68170">
    <property type="gene designation" value="UMAMIT23"/>
</dbReference>
<dbReference type="eggNOG" id="ENOG502QR4Y">
    <property type="taxonomic scope" value="Eukaryota"/>
</dbReference>
<dbReference type="HOGENOM" id="CLU_025359_1_0_1"/>
<dbReference type="InParanoid" id="F4HVM3"/>
<dbReference type="PRO" id="PR:F4HVM3"/>
<dbReference type="Proteomes" id="UP000006548">
    <property type="component" value="Chromosome 1"/>
</dbReference>
<dbReference type="ExpressionAtlas" id="F4HVM3">
    <property type="expression patterns" value="baseline and differential"/>
</dbReference>
<dbReference type="GO" id="GO:0016020">
    <property type="term" value="C:membrane"/>
    <property type="evidence" value="ECO:0007669"/>
    <property type="project" value="UniProtKB-SubCell"/>
</dbReference>
<dbReference type="GO" id="GO:0022857">
    <property type="term" value="F:transmembrane transporter activity"/>
    <property type="evidence" value="ECO:0007669"/>
    <property type="project" value="InterPro"/>
</dbReference>
<dbReference type="InterPro" id="IPR000620">
    <property type="entry name" value="EamA_dom"/>
</dbReference>
<dbReference type="InterPro" id="IPR030184">
    <property type="entry name" value="WAT1-related"/>
</dbReference>
<dbReference type="PANTHER" id="PTHR31218">
    <property type="entry name" value="WAT1-RELATED PROTEIN"/>
    <property type="match status" value="1"/>
</dbReference>
<dbReference type="Pfam" id="PF00892">
    <property type="entry name" value="EamA"/>
    <property type="match status" value="2"/>
</dbReference>
<dbReference type="SUPFAM" id="SSF103481">
    <property type="entry name" value="Multidrug resistance efflux transporter EmrE"/>
    <property type="match status" value="2"/>
</dbReference>
<keyword id="KW-0472">Membrane</keyword>
<keyword id="KW-1185">Reference proteome</keyword>
<keyword id="KW-0677">Repeat</keyword>
<keyword id="KW-0812">Transmembrane</keyword>
<keyword id="KW-1133">Transmembrane helix</keyword>
<comment type="subcellular location">
    <subcellularLocation>
        <location evidence="1">Membrane</location>
        <topology evidence="3">Multi-pass membrane protein</topology>
    </subcellularLocation>
</comment>
<comment type="similarity">
    <text evidence="3">Belongs to the drug/metabolite transporter (DMT) superfamily. Plant drug/metabolite exporter (P-DME) (TC 2.A.7.4) family.</text>
</comment>
<comment type="sequence caution" evidence="3">
    <conflict type="erroneous gene model prediction">
        <sequence resource="EMBL-CDS" id="AAG52606"/>
    </conflict>
</comment>
<sequence>MKDITAMVVVQIATAGLNIFFKLAMEDGMNPSVLVAYRLLFATLFMIPICFIFQRKKRPEFTCRLMLLALLSGLLGVVIPSILTITGLALTSATFTSAAGVLTPLVTFIFAALLRMESVRLGSSVGLAKVFGTLFGVGGALVFIFYRGIEIRLWSTHVNLVNQPRDSSRDATTHHISILGALLVFGGNISISLWFLLQVKISKQFGGPYWNATLMNMMGGVVAMLVALCWEHDLDEWRLGWNIRLLTIAYAAILISGMVVAVNAWCIESRGPLFVSVFSPVGLVIVALVGSFLLDETLHLGSIIGTVIIVGALYIVLWAKNKEMKSMLTTSDHNETNKTSKDITVNNLPTLSTNVP</sequence>
<gene>
    <name type="ordered locus">At1g68170</name>
    <name type="ORF">T22E19.23</name>
</gene>